<gene>
    <name type="primary">ZNF502</name>
</gene>
<reference key="1">
    <citation type="journal article" date="2004" name="Genome Res.">
        <title>The status, quality, and expansion of the NIH full-length cDNA project: the Mammalian Gene Collection (MGC).</title>
        <authorList>
            <consortium name="The MGC Project Team"/>
        </authorList>
    </citation>
    <scope>NUCLEOTIDE SEQUENCE [LARGE SCALE MRNA]</scope>
    <source>
        <tissue>Testis</tissue>
    </source>
</reference>
<reference key="2">
    <citation type="journal article" date="2015" name="Mol. Cell. Proteomics">
        <title>New host factors important for respiratory syncytial virus (RSV) replication revealed by a novel microfluidics screen for interactors of matrix (M) protein.</title>
        <authorList>
            <person name="Kipper S."/>
            <person name="Hamad S."/>
            <person name="Caly L."/>
            <person name="Avrahami D."/>
            <person name="Bacharach E."/>
            <person name="Jans D.A."/>
            <person name="Gerber D."/>
            <person name="Bajorek M."/>
        </authorList>
    </citation>
    <scope>INTERACTION WITH HRSV MATRIX PROTEIN (MICROBIAL INFECTION)</scope>
</reference>
<reference key="3">
    <citation type="journal article" date="2017" name="Nat. Struct. Mol. Biol.">
        <title>Site-specific mapping of the human SUMO proteome reveals co-modification with phosphorylation.</title>
        <authorList>
            <person name="Hendriks I.A."/>
            <person name="Lyon D."/>
            <person name="Young C."/>
            <person name="Jensen L.J."/>
            <person name="Vertegaal A.C."/>
            <person name="Nielsen M.L."/>
        </authorList>
    </citation>
    <scope>SUMOYLATION [LARGE SCALE ANALYSIS] AT LYS-43</scope>
    <scope>IDENTIFICATION BY MASS SPECTROMETRY [LARGE SCALE ANALYSIS]</scope>
</reference>
<name>ZN502_HUMAN</name>
<evidence type="ECO:0000255" key="1">
    <source>
        <dbReference type="PROSITE-ProRule" id="PRU00042"/>
    </source>
</evidence>
<evidence type="ECO:0000269" key="2">
    <source>
    </source>
</evidence>
<evidence type="ECO:0000305" key="3"/>
<evidence type="ECO:0007744" key="4">
    <source>
    </source>
</evidence>
<sequence length="544" mass="62920">MLNMQGAEERDIRRETCPGWVNKNKPALEQDVCKIDSSGIVVKRFQEDEYQDSTFEEKYACEGMKENSPREIAESCLFQEGGFGRITFIHKEAPPEIISQGYNFEKSLLLTSSLVTRLRVSTEESLHQWETSNIQTNDISDQSKCPTLCTQKKSWKCNECGKTFTQSSSLTQHQRTHTGERPYTCEECGKAFSRSSFLVQHQRIHTGVKPYGCEQCGKTFRCRSFLTQHQRIHTGEKPYKCNECGNSFRNHSHLTEHQRIHTGEKPYKCNRCGKAFNQNTHLIHHQRIHTGEKPYICSECGSSFRKHSNLTQHQRIHTGEKPHKCDECGKTFQTKANLSQHQRIHSGEKPYKCKECGKAFCQSPSLIKHQRIHTGEKPYKCKECGKAFTQSTPLTKHQRIHTGERPYKCSECGKAFIQSICLIRHQRSHTGEKPYKCNECGKGFNQNTCLTQHMRIHTGEKPYKCKECGKAFAHSSSLTEHHRTHTGEKLYKCSECEKTFRKYAHLSEHYRIHTGEKPYECIECGKFFRHSSVLFRHQKLHSGD</sequence>
<protein>
    <recommendedName>
        <fullName>Zinc finger protein 502</fullName>
    </recommendedName>
</protein>
<keyword id="KW-0238">DNA-binding</keyword>
<keyword id="KW-0945">Host-virus interaction</keyword>
<keyword id="KW-1017">Isopeptide bond</keyword>
<keyword id="KW-0479">Metal-binding</keyword>
<keyword id="KW-0539">Nucleus</keyword>
<keyword id="KW-1267">Proteomics identification</keyword>
<keyword id="KW-1185">Reference proteome</keyword>
<keyword id="KW-0677">Repeat</keyword>
<keyword id="KW-0804">Transcription</keyword>
<keyword id="KW-0805">Transcription regulation</keyword>
<keyword id="KW-0832">Ubl conjugation</keyword>
<keyword id="KW-0862">Zinc</keyword>
<keyword id="KW-0863">Zinc-finger</keyword>
<comment type="function">
    <text>May be involved in transcriptional regulation.</text>
</comment>
<comment type="subunit">
    <text evidence="2">(Microbial infection) Interacts with human respiratory syncytial virus (HRSV) matrix protein; this interaction probably facilitates viral release.</text>
</comment>
<comment type="interaction">
    <interactant intactId="EBI-10273699">
        <id>Q8TBZ5</id>
    </interactant>
    <interactant intactId="EBI-359224">
        <id>Q13077</id>
        <label>TRAF1</label>
    </interactant>
    <organismsDiffer>false</organismsDiffer>
    <experiments>7</experiments>
</comment>
<comment type="interaction">
    <interactant intactId="EBI-10273699">
        <id>Q8TBZ5</id>
    </interactant>
    <interactant intactId="EBI-10042882">
        <id>P0DOE7</id>
        <label>M</label>
    </interactant>
    <organismsDiffer>true</organismsDiffer>
    <experiments>3</experiments>
</comment>
<comment type="subcellular location">
    <subcellularLocation>
        <location evidence="3">Nucleus</location>
    </subcellularLocation>
</comment>
<comment type="similarity">
    <text evidence="3">Belongs to the krueppel C2H2-type zinc-finger protein family.</text>
</comment>
<proteinExistence type="evidence at protein level"/>
<dbReference type="EMBL" id="BC028377">
    <property type="protein sequence ID" value="AAH28377.1"/>
    <property type="molecule type" value="mRNA"/>
</dbReference>
<dbReference type="CCDS" id="CCDS2719.1"/>
<dbReference type="RefSeq" id="NP_001127912.1">
    <property type="nucleotide sequence ID" value="NM_001134440.2"/>
</dbReference>
<dbReference type="RefSeq" id="NP_001127913.1">
    <property type="nucleotide sequence ID" value="NM_001134441.2"/>
</dbReference>
<dbReference type="RefSeq" id="NP_001127914.1">
    <property type="nucleotide sequence ID" value="NM_001134442.3"/>
</dbReference>
<dbReference type="RefSeq" id="NP_001269809.1">
    <property type="nucleotide sequence ID" value="NM_001282880.2"/>
</dbReference>
<dbReference type="RefSeq" id="NP_149987.2">
    <property type="nucleotide sequence ID" value="NM_033210.4"/>
</dbReference>
<dbReference type="RefSeq" id="XP_016862929.1">
    <property type="nucleotide sequence ID" value="XM_017007440.1"/>
</dbReference>
<dbReference type="SMR" id="Q8TBZ5"/>
<dbReference type="BioGRID" id="124825">
    <property type="interactions" value="3"/>
</dbReference>
<dbReference type="FunCoup" id="Q8TBZ5">
    <property type="interactions" value="542"/>
</dbReference>
<dbReference type="IntAct" id="Q8TBZ5">
    <property type="interactions" value="3"/>
</dbReference>
<dbReference type="STRING" id="9606.ENSP00000296091"/>
<dbReference type="GlyGen" id="Q8TBZ5">
    <property type="glycosylation" value="2 sites, 1 O-linked glycan (2 sites)"/>
</dbReference>
<dbReference type="iPTMnet" id="Q8TBZ5"/>
<dbReference type="PhosphoSitePlus" id="Q8TBZ5"/>
<dbReference type="BioMuta" id="ZNF502"/>
<dbReference type="DMDM" id="45477319"/>
<dbReference type="jPOST" id="Q8TBZ5"/>
<dbReference type="MassIVE" id="Q8TBZ5"/>
<dbReference type="PaxDb" id="9606-ENSP00000296091"/>
<dbReference type="PeptideAtlas" id="Q8TBZ5"/>
<dbReference type="ProteomicsDB" id="74060"/>
<dbReference type="Antibodypedia" id="29472">
    <property type="antibodies" value="108 antibodies from 17 providers"/>
</dbReference>
<dbReference type="DNASU" id="91392"/>
<dbReference type="Ensembl" id="ENST00000296091.8">
    <property type="protein sequence ID" value="ENSP00000296091.4"/>
    <property type="gene ID" value="ENSG00000196653.12"/>
</dbReference>
<dbReference type="Ensembl" id="ENST00000436624.7">
    <property type="protein sequence ID" value="ENSP00000406469.2"/>
    <property type="gene ID" value="ENSG00000196653.12"/>
</dbReference>
<dbReference type="Ensembl" id="ENST00000449836.5">
    <property type="protein sequence ID" value="ENSP00000397390.1"/>
    <property type="gene ID" value="ENSG00000196653.12"/>
</dbReference>
<dbReference type="Ensembl" id="ENST00000626630.2">
    <property type="protein sequence ID" value="ENSP00000487139.1"/>
    <property type="gene ID" value="ENSG00000281448.3"/>
</dbReference>
<dbReference type="Ensembl" id="ENST00000628995.3">
    <property type="protein sequence ID" value="ENSP00000485847.1"/>
    <property type="gene ID" value="ENSG00000281448.3"/>
</dbReference>
<dbReference type="Ensembl" id="ENST00000630464.2">
    <property type="protein sequence ID" value="ENSP00000486576.1"/>
    <property type="gene ID" value="ENSG00000281448.3"/>
</dbReference>
<dbReference type="GeneID" id="91392"/>
<dbReference type="KEGG" id="hsa:91392"/>
<dbReference type="MANE-Select" id="ENST00000436624.7">
    <property type="protein sequence ID" value="ENSP00000406469.2"/>
    <property type="RefSeq nucleotide sequence ID" value="NM_001134442.3"/>
    <property type="RefSeq protein sequence ID" value="NP_001127914.1"/>
</dbReference>
<dbReference type="UCSC" id="uc003cns.4">
    <property type="organism name" value="human"/>
</dbReference>
<dbReference type="AGR" id="HGNC:23718"/>
<dbReference type="CTD" id="91392"/>
<dbReference type="DisGeNET" id="91392"/>
<dbReference type="GeneCards" id="ZNF502"/>
<dbReference type="HGNC" id="HGNC:23718">
    <property type="gene designation" value="ZNF502"/>
</dbReference>
<dbReference type="HPA" id="ENSG00000196653">
    <property type="expression patterns" value="Low tissue specificity"/>
</dbReference>
<dbReference type="neXtProt" id="NX_Q8TBZ5"/>
<dbReference type="OpenTargets" id="ENSG00000196653"/>
<dbReference type="PharmGKB" id="PA134866656"/>
<dbReference type="VEuPathDB" id="HostDB:ENSG00000196653"/>
<dbReference type="eggNOG" id="KOG1721">
    <property type="taxonomic scope" value="Eukaryota"/>
</dbReference>
<dbReference type="GeneTree" id="ENSGT00940000163095"/>
<dbReference type="HOGENOM" id="CLU_002678_44_0_1"/>
<dbReference type="InParanoid" id="Q8TBZ5"/>
<dbReference type="OMA" id="WETSNIH"/>
<dbReference type="OrthoDB" id="6591996at2759"/>
<dbReference type="PAN-GO" id="Q8TBZ5">
    <property type="GO annotations" value="3 GO annotations based on evolutionary models"/>
</dbReference>
<dbReference type="PhylomeDB" id="Q8TBZ5"/>
<dbReference type="TreeFam" id="TF341817"/>
<dbReference type="PathwayCommons" id="Q8TBZ5"/>
<dbReference type="SignaLink" id="Q8TBZ5"/>
<dbReference type="BioGRID-ORCS" id="91392">
    <property type="hits" value="5 hits in 1166 CRISPR screens"/>
</dbReference>
<dbReference type="GenomeRNAi" id="91392"/>
<dbReference type="Pharos" id="Q8TBZ5">
    <property type="development level" value="Tbio"/>
</dbReference>
<dbReference type="PRO" id="PR:Q8TBZ5"/>
<dbReference type="Proteomes" id="UP000005640">
    <property type="component" value="Chromosome 3"/>
</dbReference>
<dbReference type="RNAct" id="Q8TBZ5">
    <property type="molecule type" value="protein"/>
</dbReference>
<dbReference type="Bgee" id="ENSG00000196653">
    <property type="expression patterns" value="Expressed in male germ line stem cell (sensu Vertebrata) in testis and 103 other cell types or tissues"/>
</dbReference>
<dbReference type="ExpressionAtlas" id="Q8TBZ5">
    <property type="expression patterns" value="baseline and differential"/>
</dbReference>
<dbReference type="GO" id="GO:0005634">
    <property type="term" value="C:nucleus"/>
    <property type="evidence" value="ECO:0000314"/>
    <property type="project" value="AgBase"/>
</dbReference>
<dbReference type="GO" id="GO:0000981">
    <property type="term" value="F:DNA-binding transcription factor activity, RNA polymerase II-specific"/>
    <property type="evidence" value="ECO:0000318"/>
    <property type="project" value="GO_Central"/>
</dbReference>
<dbReference type="GO" id="GO:0000978">
    <property type="term" value="F:RNA polymerase II cis-regulatory region sequence-specific DNA binding"/>
    <property type="evidence" value="ECO:0000318"/>
    <property type="project" value="GO_Central"/>
</dbReference>
<dbReference type="GO" id="GO:0008270">
    <property type="term" value="F:zinc ion binding"/>
    <property type="evidence" value="ECO:0007669"/>
    <property type="project" value="UniProtKB-KW"/>
</dbReference>
<dbReference type="GO" id="GO:0044794">
    <property type="term" value="P:positive regulation by host of viral process"/>
    <property type="evidence" value="ECO:0000315"/>
    <property type="project" value="AgBase"/>
</dbReference>
<dbReference type="GO" id="GO:0006355">
    <property type="term" value="P:regulation of DNA-templated transcription"/>
    <property type="evidence" value="ECO:0000318"/>
    <property type="project" value="GO_Central"/>
</dbReference>
<dbReference type="GO" id="GO:0019076">
    <property type="term" value="P:viral release from host cell"/>
    <property type="evidence" value="ECO:0000315"/>
    <property type="project" value="AgBase"/>
</dbReference>
<dbReference type="FunFam" id="3.30.160.60:FF:000029">
    <property type="entry name" value="GLI family zinc finger 4"/>
    <property type="match status" value="1"/>
</dbReference>
<dbReference type="FunFam" id="3.30.160.60:FF:001478">
    <property type="entry name" value="Zinc finger protein 134"/>
    <property type="match status" value="1"/>
</dbReference>
<dbReference type="FunFam" id="3.30.160.60:FF:000914">
    <property type="entry name" value="Zinc finger protein 16"/>
    <property type="match status" value="1"/>
</dbReference>
<dbReference type="FunFam" id="3.30.160.60:FF:000380">
    <property type="entry name" value="zinc finger protein 2 isoform X2"/>
    <property type="match status" value="1"/>
</dbReference>
<dbReference type="FunFam" id="3.30.160.60:FF:002343">
    <property type="entry name" value="Zinc finger protein 33A"/>
    <property type="match status" value="2"/>
</dbReference>
<dbReference type="FunFam" id="3.30.160.60:FF:000690">
    <property type="entry name" value="Zinc finger protein 354C"/>
    <property type="match status" value="1"/>
</dbReference>
<dbReference type="FunFam" id="3.30.160.60:FF:000016">
    <property type="entry name" value="zinc finger protein 37 homolog"/>
    <property type="match status" value="1"/>
</dbReference>
<dbReference type="FunFam" id="3.30.160.60:FF:001462">
    <property type="entry name" value="Zinc finger protein 502, isoform CRA_a"/>
    <property type="match status" value="1"/>
</dbReference>
<dbReference type="FunFam" id="3.30.160.60:FF:000737">
    <property type="entry name" value="Zinc finger protein 565"/>
    <property type="match status" value="2"/>
</dbReference>
<dbReference type="FunFam" id="3.30.160.60:FF:001880">
    <property type="entry name" value="zinc finger protein 69 homolog isoform X2"/>
    <property type="match status" value="1"/>
</dbReference>
<dbReference type="FunFam" id="3.30.160.60:FF:000176">
    <property type="entry name" value="zinc finger protein 70"/>
    <property type="match status" value="1"/>
</dbReference>
<dbReference type="FunFam" id="3.30.160.60:FF:000099">
    <property type="entry name" value="Zinc finger protein 79"/>
    <property type="match status" value="1"/>
</dbReference>
<dbReference type="Gene3D" id="3.30.160.60">
    <property type="entry name" value="Classic Zinc Finger"/>
    <property type="match status" value="14"/>
</dbReference>
<dbReference type="InterPro" id="IPR036236">
    <property type="entry name" value="Znf_C2H2_sf"/>
</dbReference>
<dbReference type="InterPro" id="IPR013087">
    <property type="entry name" value="Znf_C2H2_type"/>
</dbReference>
<dbReference type="PANTHER" id="PTHR24394">
    <property type="entry name" value="ZINC FINGER PROTEIN"/>
    <property type="match status" value="1"/>
</dbReference>
<dbReference type="PANTHER" id="PTHR24394:SF48">
    <property type="entry name" value="ZINC FINGER PROTEIN 771"/>
    <property type="match status" value="1"/>
</dbReference>
<dbReference type="Pfam" id="PF00096">
    <property type="entry name" value="zf-C2H2"/>
    <property type="match status" value="11"/>
</dbReference>
<dbReference type="Pfam" id="PF13465">
    <property type="entry name" value="zf-H2C2_2"/>
    <property type="match status" value="1"/>
</dbReference>
<dbReference type="SMART" id="SM00355">
    <property type="entry name" value="ZnF_C2H2"/>
    <property type="match status" value="14"/>
</dbReference>
<dbReference type="SUPFAM" id="SSF57667">
    <property type="entry name" value="beta-beta-alpha zinc fingers"/>
    <property type="match status" value="8"/>
</dbReference>
<dbReference type="PROSITE" id="PS00028">
    <property type="entry name" value="ZINC_FINGER_C2H2_1"/>
    <property type="match status" value="14"/>
</dbReference>
<dbReference type="PROSITE" id="PS50157">
    <property type="entry name" value="ZINC_FINGER_C2H2_2"/>
    <property type="match status" value="14"/>
</dbReference>
<feature type="chain" id="PRO_0000047623" description="Zinc finger protein 502">
    <location>
        <begin position="1"/>
        <end position="544"/>
    </location>
</feature>
<feature type="zinc finger region" description="C2H2-type 1" evidence="1">
    <location>
        <begin position="155"/>
        <end position="177"/>
    </location>
</feature>
<feature type="zinc finger region" description="C2H2-type 2" evidence="1">
    <location>
        <begin position="183"/>
        <end position="205"/>
    </location>
</feature>
<feature type="zinc finger region" description="C2H2-type 3" evidence="1">
    <location>
        <begin position="211"/>
        <end position="233"/>
    </location>
</feature>
<feature type="zinc finger region" description="C2H2-type 4" evidence="1">
    <location>
        <begin position="239"/>
        <end position="261"/>
    </location>
</feature>
<feature type="zinc finger region" description="C2H2-type 5" evidence="1">
    <location>
        <begin position="267"/>
        <end position="289"/>
    </location>
</feature>
<feature type="zinc finger region" description="C2H2-type 6" evidence="1">
    <location>
        <begin position="295"/>
        <end position="317"/>
    </location>
</feature>
<feature type="zinc finger region" description="C2H2-type 7" evidence="1">
    <location>
        <begin position="323"/>
        <end position="345"/>
    </location>
</feature>
<feature type="zinc finger region" description="C2H2-type 8" evidence="1">
    <location>
        <begin position="351"/>
        <end position="373"/>
    </location>
</feature>
<feature type="zinc finger region" description="C2H2-type 9" evidence="1">
    <location>
        <begin position="379"/>
        <end position="401"/>
    </location>
</feature>
<feature type="zinc finger region" description="C2H2-type 10" evidence="1">
    <location>
        <begin position="407"/>
        <end position="429"/>
    </location>
</feature>
<feature type="zinc finger region" description="C2H2-type 11" evidence="1">
    <location>
        <begin position="435"/>
        <end position="457"/>
    </location>
</feature>
<feature type="zinc finger region" description="C2H2-type 12" evidence="1">
    <location>
        <begin position="463"/>
        <end position="485"/>
    </location>
</feature>
<feature type="zinc finger region" description="C2H2-type 13" evidence="1">
    <location>
        <begin position="491"/>
        <end position="513"/>
    </location>
</feature>
<feature type="zinc finger region" description="C2H2-type 14" evidence="1">
    <location>
        <begin position="519"/>
        <end position="541"/>
    </location>
</feature>
<feature type="cross-link" description="Glycyl lysine isopeptide (Lys-Gly) (interchain with G-Cter in SUMO2)" evidence="4">
    <location>
        <position position="43"/>
    </location>
</feature>
<feature type="sequence variant" id="VAR_033574" description="In dbSNP:rs6798400.">
    <original>L</original>
    <variation>P</variation>
    <location>
        <position position="28"/>
    </location>
</feature>
<feature type="sequence variant" id="VAR_061953" description="In dbSNP:rs56084453.">
    <original>Q</original>
    <variation>R</variation>
    <location>
        <position position="174"/>
    </location>
</feature>
<feature type="sequence variant" id="VAR_024220" description="In dbSNP:rs7640654.">
    <original>E</original>
    <variation>A</variation>
    <location>
        <position position="243"/>
    </location>
</feature>
<organism>
    <name type="scientific">Homo sapiens</name>
    <name type="common">Human</name>
    <dbReference type="NCBI Taxonomy" id="9606"/>
    <lineage>
        <taxon>Eukaryota</taxon>
        <taxon>Metazoa</taxon>
        <taxon>Chordata</taxon>
        <taxon>Craniata</taxon>
        <taxon>Vertebrata</taxon>
        <taxon>Euteleostomi</taxon>
        <taxon>Mammalia</taxon>
        <taxon>Eutheria</taxon>
        <taxon>Euarchontoglires</taxon>
        <taxon>Primates</taxon>
        <taxon>Haplorrhini</taxon>
        <taxon>Catarrhini</taxon>
        <taxon>Hominidae</taxon>
        <taxon>Homo</taxon>
    </lineage>
</organism>
<accession>Q8TBZ5</accession>